<protein>
    <recommendedName>
        <fullName evidence="1">UDP-N-acetylglucosamine--N-acetylmuramyl-(pentapeptide) pyrophosphoryl-undecaprenol N-acetylglucosamine transferase</fullName>
        <ecNumber evidence="1">2.4.1.227</ecNumber>
    </recommendedName>
    <alternativeName>
        <fullName evidence="1">Undecaprenyl-PP-MurNAc-pentapeptide-UDPGlcNAc GlcNAc transferase</fullName>
    </alternativeName>
</protein>
<evidence type="ECO:0000255" key="1">
    <source>
        <dbReference type="HAMAP-Rule" id="MF_00033"/>
    </source>
</evidence>
<reference key="1">
    <citation type="journal article" date="2005" name="Nucleic Acids Res.">
        <title>Genome dynamics and diversity of Shigella species, the etiologic agents of bacillary dysentery.</title>
        <authorList>
            <person name="Yang F."/>
            <person name="Yang J."/>
            <person name="Zhang X."/>
            <person name="Chen L."/>
            <person name="Jiang Y."/>
            <person name="Yan Y."/>
            <person name="Tang X."/>
            <person name="Wang J."/>
            <person name="Xiong Z."/>
            <person name="Dong J."/>
            <person name="Xue Y."/>
            <person name="Zhu Y."/>
            <person name="Xu X."/>
            <person name="Sun L."/>
            <person name="Chen S."/>
            <person name="Nie H."/>
            <person name="Peng J."/>
            <person name="Xu J."/>
            <person name="Wang Y."/>
            <person name="Yuan Z."/>
            <person name="Wen Y."/>
            <person name="Yao Z."/>
            <person name="Shen Y."/>
            <person name="Qiang B."/>
            <person name="Hou Y."/>
            <person name="Yu J."/>
            <person name="Jin Q."/>
        </authorList>
    </citation>
    <scope>NUCLEOTIDE SEQUENCE [LARGE SCALE GENOMIC DNA]</scope>
    <source>
        <strain>Ss046</strain>
    </source>
</reference>
<proteinExistence type="inferred from homology"/>
<dbReference type="EC" id="2.4.1.227" evidence="1"/>
<dbReference type="EMBL" id="CP000038">
    <property type="protein sequence ID" value="AAZ86893.1"/>
    <property type="molecule type" value="Genomic_DNA"/>
</dbReference>
<dbReference type="RefSeq" id="WP_000016559.1">
    <property type="nucleotide sequence ID" value="NC_007384.1"/>
</dbReference>
<dbReference type="SMR" id="Q3Z5R9"/>
<dbReference type="CAZy" id="GT28">
    <property type="family name" value="Glycosyltransferase Family 28"/>
</dbReference>
<dbReference type="GeneID" id="93777344"/>
<dbReference type="KEGG" id="ssn:SSON_0098"/>
<dbReference type="HOGENOM" id="CLU_037404_2_0_6"/>
<dbReference type="UniPathway" id="UPA00219"/>
<dbReference type="Proteomes" id="UP000002529">
    <property type="component" value="Chromosome"/>
</dbReference>
<dbReference type="GO" id="GO:0005886">
    <property type="term" value="C:plasma membrane"/>
    <property type="evidence" value="ECO:0007669"/>
    <property type="project" value="UniProtKB-SubCell"/>
</dbReference>
<dbReference type="GO" id="GO:0051991">
    <property type="term" value="F:UDP-N-acetyl-D-glucosamine:N-acetylmuramoyl-L-alanyl-D-glutamyl-meso-2,6-diaminopimelyl-D-alanyl-D-alanine-diphosphoundecaprenol 4-beta-N-acetylglucosaminlytransferase activity"/>
    <property type="evidence" value="ECO:0007669"/>
    <property type="project" value="RHEA"/>
</dbReference>
<dbReference type="GO" id="GO:0050511">
    <property type="term" value="F:undecaprenyldiphospho-muramoylpentapeptide beta-N-acetylglucosaminyltransferase activity"/>
    <property type="evidence" value="ECO:0007669"/>
    <property type="project" value="UniProtKB-UniRule"/>
</dbReference>
<dbReference type="GO" id="GO:0005975">
    <property type="term" value="P:carbohydrate metabolic process"/>
    <property type="evidence" value="ECO:0007669"/>
    <property type="project" value="InterPro"/>
</dbReference>
<dbReference type="GO" id="GO:0051301">
    <property type="term" value="P:cell division"/>
    <property type="evidence" value="ECO:0007669"/>
    <property type="project" value="UniProtKB-KW"/>
</dbReference>
<dbReference type="GO" id="GO:0071555">
    <property type="term" value="P:cell wall organization"/>
    <property type="evidence" value="ECO:0007669"/>
    <property type="project" value="UniProtKB-KW"/>
</dbReference>
<dbReference type="GO" id="GO:0030259">
    <property type="term" value="P:lipid glycosylation"/>
    <property type="evidence" value="ECO:0007669"/>
    <property type="project" value="UniProtKB-UniRule"/>
</dbReference>
<dbReference type="GO" id="GO:0009252">
    <property type="term" value="P:peptidoglycan biosynthetic process"/>
    <property type="evidence" value="ECO:0007669"/>
    <property type="project" value="UniProtKB-UniRule"/>
</dbReference>
<dbReference type="GO" id="GO:0008360">
    <property type="term" value="P:regulation of cell shape"/>
    <property type="evidence" value="ECO:0007669"/>
    <property type="project" value="UniProtKB-KW"/>
</dbReference>
<dbReference type="CDD" id="cd03785">
    <property type="entry name" value="GT28_MurG"/>
    <property type="match status" value="1"/>
</dbReference>
<dbReference type="FunFam" id="3.40.50.2000:FF:000016">
    <property type="entry name" value="UDP-N-acetylglucosamine--N-acetylmuramyl-(pentapeptide) pyrophosphoryl-undecaprenol N-acetylglucosamine transferase"/>
    <property type="match status" value="1"/>
</dbReference>
<dbReference type="FunFam" id="3.40.50.2000:FF:000018">
    <property type="entry name" value="UDP-N-acetylglucosamine--N-acetylmuramyl-(pentapeptide) pyrophosphoryl-undecaprenol N-acetylglucosamine transferase"/>
    <property type="match status" value="1"/>
</dbReference>
<dbReference type="Gene3D" id="3.40.50.2000">
    <property type="entry name" value="Glycogen Phosphorylase B"/>
    <property type="match status" value="2"/>
</dbReference>
<dbReference type="HAMAP" id="MF_00033">
    <property type="entry name" value="MurG"/>
    <property type="match status" value="1"/>
</dbReference>
<dbReference type="InterPro" id="IPR006009">
    <property type="entry name" value="GlcNAc_MurG"/>
</dbReference>
<dbReference type="InterPro" id="IPR007235">
    <property type="entry name" value="Glyco_trans_28_C"/>
</dbReference>
<dbReference type="InterPro" id="IPR004276">
    <property type="entry name" value="GlycoTrans_28_N"/>
</dbReference>
<dbReference type="NCBIfam" id="TIGR01133">
    <property type="entry name" value="murG"/>
    <property type="match status" value="1"/>
</dbReference>
<dbReference type="PANTHER" id="PTHR21015:SF22">
    <property type="entry name" value="GLYCOSYLTRANSFERASE"/>
    <property type="match status" value="1"/>
</dbReference>
<dbReference type="PANTHER" id="PTHR21015">
    <property type="entry name" value="UDP-N-ACETYLGLUCOSAMINE--N-ACETYLMURAMYL-(PENTAPEPTIDE) PYROPHOSPHORYL-UNDECAPRENOL N-ACETYLGLUCOSAMINE TRANSFERASE 1"/>
    <property type="match status" value="1"/>
</dbReference>
<dbReference type="Pfam" id="PF04101">
    <property type="entry name" value="Glyco_tran_28_C"/>
    <property type="match status" value="1"/>
</dbReference>
<dbReference type="Pfam" id="PF03033">
    <property type="entry name" value="Glyco_transf_28"/>
    <property type="match status" value="1"/>
</dbReference>
<dbReference type="SUPFAM" id="SSF53756">
    <property type="entry name" value="UDP-Glycosyltransferase/glycogen phosphorylase"/>
    <property type="match status" value="1"/>
</dbReference>
<organism>
    <name type="scientific">Shigella sonnei (strain Ss046)</name>
    <dbReference type="NCBI Taxonomy" id="300269"/>
    <lineage>
        <taxon>Bacteria</taxon>
        <taxon>Pseudomonadati</taxon>
        <taxon>Pseudomonadota</taxon>
        <taxon>Gammaproteobacteria</taxon>
        <taxon>Enterobacterales</taxon>
        <taxon>Enterobacteriaceae</taxon>
        <taxon>Shigella</taxon>
    </lineage>
</organism>
<keyword id="KW-0131">Cell cycle</keyword>
<keyword id="KW-0132">Cell division</keyword>
<keyword id="KW-0997">Cell inner membrane</keyword>
<keyword id="KW-1003">Cell membrane</keyword>
<keyword id="KW-0133">Cell shape</keyword>
<keyword id="KW-0961">Cell wall biogenesis/degradation</keyword>
<keyword id="KW-0328">Glycosyltransferase</keyword>
<keyword id="KW-0472">Membrane</keyword>
<keyword id="KW-0573">Peptidoglycan synthesis</keyword>
<keyword id="KW-1185">Reference proteome</keyword>
<keyword id="KW-0808">Transferase</keyword>
<comment type="function">
    <text evidence="1">Cell wall formation. Catalyzes the transfer of a GlcNAc subunit on undecaprenyl-pyrophosphoryl-MurNAc-pentapeptide (lipid intermediate I) to form undecaprenyl-pyrophosphoryl-MurNAc-(pentapeptide)GlcNAc (lipid intermediate II).</text>
</comment>
<comment type="catalytic activity">
    <reaction evidence="1">
        <text>di-trans,octa-cis-undecaprenyl diphospho-N-acetyl-alpha-D-muramoyl-L-alanyl-D-glutamyl-meso-2,6-diaminopimeloyl-D-alanyl-D-alanine + UDP-N-acetyl-alpha-D-glucosamine = di-trans,octa-cis-undecaprenyl diphospho-[N-acetyl-alpha-D-glucosaminyl-(1-&gt;4)]-N-acetyl-alpha-D-muramoyl-L-alanyl-D-glutamyl-meso-2,6-diaminopimeloyl-D-alanyl-D-alanine + UDP + H(+)</text>
        <dbReference type="Rhea" id="RHEA:31227"/>
        <dbReference type="ChEBI" id="CHEBI:15378"/>
        <dbReference type="ChEBI" id="CHEBI:57705"/>
        <dbReference type="ChEBI" id="CHEBI:58223"/>
        <dbReference type="ChEBI" id="CHEBI:61387"/>
        <dbReference type="ChEBI" id="CHEBI:61388"/>
        <dbReference type="EC" id="2.4.1.227"/>
    </reaction>
</comment>
<comment type="pathway">
    <text evidence="1">Cell wall biogenesis; peptidoglycan biosynthesis.</text>
</comment>
<comment type="subcellular location">
    <subcellularLocation>
        <location evidence="1">Cell inner membrane</location>
        <topology evidence="1">Peripheral membrane protein</topology>
        <orientation evidence="1">Cytoplasmic side</orientation>
    </subcellularLocation>
</comment>
<comment type="similarity">
    <text evidence="1">Belongs to the glycosyltransferase 28 family. MurG subfamily.</text>
</comment>
<sequence>MSGQGKRLMVMAGGTGGHVFPGLAVAHHLMAQGWQVRWLGTADRMEADLVPKHGIEIDFIRISGLRGKGIKALIAAPLRIFNAWRQARAIMKAYKPDVVLGMGGYVSGPGGLAAWSLGIPVVLHEQNGIAGLTNKWLAKIATKVMQAFPGAFPNAEVVGNPVRTDVLALPLPQQRLAGREGPVRVLVVGGSQGARILNQTMPQVAAKLGDSVTIWHQSGKGSQQSVEQAYAEAGQPQHKVTEFIDDMAAAYAWADVVVCRSGALTVSEIAAAGLPALFVPFQHKDRQQYWNALPLEKAGAAKIIEQPQLSVDAVANTLAGWSRETLLTMAERARAASIPDATERVANEVSRAARA</sequence>
<accession>Q3Z5R9</accession>
<name>MURG_SHISS</name>
<gene>
    <name evidence="1" type="primary">murG</name>
    <name type="ordered locus">SSON_0098</name>
</gene>
<feature type="chain" id="PRO_0000225096" description="UDP-N-acetylglucosamine--N-acetylmuramyl-(pentapeptide) pyrophosphoryl-undecaprenol N-acetylglucosamine transferase">
    <location>
        <begin position="1"/>
        <end position="355"/>
    </location>
</feature>
<feature type="binding site" evidence="1">
    <location>
        <begin position="15"/>
        <end position="17"/>
    </location>
    <ligand>
        <name>UDP-N-acetyl-alpha-D-glucosamine</name>
        <dbReference type="ChEBI" id="CHEBI:57705"/>
    </ligand>
</feature>
<feature type="binding site" evidence="1">
    <location>
        <position position="127"/>
    </location>
    <ligand>
        <name>UDP-N-acetyl-alpha-D-glucosamine</name>
        <dbReference type="ChEBI" id="CHEBI:57705"/>
    </ligand>
</feature>
<feature type="binding site" evidence="1">
    <location>
        <position position="163"/>
    </location>
    <ligand>
        <name>UDP-N-acetyl-alpha-D-glucosamine</name>
        <dbReference type="ChEBI" id="CHEBI:57705"/>
    </ligand>
</feature>
<feature type="binding site" evidence="1">
    <location>
        <position position="191"/>
    </location>
    <ligand>
        <name>UDP-N-acetyl-alpha-D-glucosamine</name>
        <dbReference type="ChEBI" id="CHEBI:57705"/>
    </ligand>
</feature>
<feature type="binding site" evidence="1">
    <location>
        <position position="244"/>
    </location>
    <ligand>
        <name>UDP-N-acetyl-alpha-D-glucosamine</name>
        <dbReference type="ChEBI" id="CHEBI:57705"/>
    </ligand>
</feature>
<feature type="binding site" evidence="1">
    <location>
        <begin position="263"/>
        <end position="268"/>
    </location>
    <ligand>
        <name>UDP-N-acetyl-alpha-D-glucosamine</name>
        <dbReference type="ChEBI" id="CHEBI:57705"/>
    </ligand>
</feature>
<feature type="binding site" evidence="1">
    <location>
        <position position="288"/>
    </location>
    <ligand>
        <name>UDP-N-acetyl-alpha-D-glucosamine</name>
        <dbReference type="ChEBI" id="CHEBI:57705"/>
    </ligand>
</feature>